<organism>
    <name type="scientific">Aquifex aeolicus (strain VF5)</name>
    <dbReference type="NCBI Taxonomy" id="224324"/>
    <lineage>
        <taxon>Bacteria</taxon>
        <taxon>Pseudomonadati</taxon>
        <taxon>Aquificota</taxon>
        <taxon>Aquificia</taxon>
        <taxon>Aquificales</taxon>
        <taxon>Aquificaceae</taxon>
        <taxon>Aquifex</taxon>
    </lineage>
</organism>
<name>TRMFO_AQUAE</name>
<sequence>MKEKVIVIGGGLAGSEAAWRLANEGHRVILYEMRPKKMTPAHKTGNLAELVCSNTLGGLELTTGAGLLKAEMQKLGSLVIEAAKVARVPAGGALGVDRKIFSEYITEKIESHPNITLIREEVKEIPEDEVVVIATGPLTSDALSEKIKELVGYDTLYFYDAIAPIVEAESVDFSKGFWGSRYGKGGDDYFNCVLTEEEYKKFYEELLKAEKVKPKDFEKAVHFEGCLPIEEMAERGYKTLLFGPMKPVGLVDPRTGKEPFAVVQLRKENKEGTLLSLVGFQTKLTYKEQKRVFRLIPCLRNAVFVRLGSMHRNTFIQSNKVLTHYLNLKKKENIFFAGQITGVEGYVASSATGILAGINAGRLARGEKPLKAPTETMLGALVNYIVTKEGELQPMNPVFGLLPPLEKKVRDKKKRKELMAKRALETMEKWIKENNLVPEGLVKVC</sequence>
<comment type="function">
    <text evidence="1">Catalyzes the folate-dependent formation of 5-methyl-uridine at position 54 (M-5-U54) in all tRNAs.</text>
</comment>
<comment type="catalytic activity">
    <reaction evidence="1">
        <text>uridine(54) in tRNA + (6R)-5,10-methylene-5,6,7,8-tetrahydrofolate + NADH + H(+) = 5-methyluridine(54) in tRNA + (6S)-5,6,7,8-tetrahydrofolate + NAD(+)</text>
        <dbReference type="Rhea" id="RHEA:16873"/>
        <dbReference type="Rhea" id="RHEA-COMP:10167"/>
        <dbReference type="Rhea" id="RHEA-COMP:10193"/>
        <dbReference type="ChEBI" id="CHEBI:15378"/>
        <dbReference type="ChEBI" id="CHEBI:15636"/>
        <dbReference type="ChEBI" id="CHEBI:57453"/>
        <dbReference type="ChEBI" id="CHEBI:57540"/>
        <dbReference type="ChEBI" id="CHEBI:57945"/>
        <dbReference type="ChEBI" id="CHEBI:65315"/>
        <dbReference type="ChEBI" id="CHEBI:74447"/>
        <dbReference type="EC" id="2.1.1.74"/>
    </reaction>
</comment>
<comment type="catalytic activity">
    <reaction evidence="1">
        <text>uridine(54) in tRNA + (6R)-5,10-methylene-5,6,7,8-tetrahydrofolate + NADPH + H(+) = 5-methyluridine(54) in tRNA + (6S)-5,6,7,8-tetrahydrofolate + NADP(+)</text>
        <dbReference type="Rhea" id="RHEA:62372"/>
        <dbReference type="Rhea" id="RHEA-COMP:10167"/>
        <dbReference type="Rhea" id="RHEA-COMP:10193"/>
        <dbReference type="ChEBI" id="CHEBI:15378"/>
        <dbReference type="ChEBI" id="CHEBI:15636"/>
        <dbReference type="ChEBI" id="CHEBI:57453"/>
        <dbReference type="ChEBI" id="CHEBI:57783"/>
        <dbReference type="ChEBI" id="CHEBI:58349"/>
        <dbReference type="ChEBI" id="CHEBI:65315"/>
        <dbReference type="ChEBI" id="CHEBI:74447"/>
        <dbReference type="EC" id="2.1.1.74"/>
    </reaction>
</comment>
<comment type="cofactor">
    <cofactor evidence="1">
        <name>FAD</name>
        <dbReference type="ChEBI" id="CHEBI:57692"/>
    </cofactor>
</comment>
<comment type="subcellular location">
    <subcellularLocation>
        <location evidence="1">Cytoplasm</location>
    </subcellularLocation>
</comment>
<comment type="similarity">
    <text evidence="1">Belongs to the MnmG family. TrmFO subfamily.</text>
</comment>
<evidence type="ECO:0000255" key="1">
    <source>
        <dbReference type="HAMAP-Rule" id="MF_01037"/>
    </source>
</evidence>
<feature type="chain" id="PRO_0000117227" description="Methylenetetrahydrofolate--tRNA-(uracil-5-)-methyltransferase TrmFO">
    <location>
        <begin position="1"/>
        <end position="445"/>
    </location>
</feature>
<feature type="binding site" evidence="1">
    <location>
        <begin position="9"/>
        <end position="14"/>
    </location>
    <ligand>
        <name>FAD</name>
        <dbReference type="ChEBI" id="CHEBI:57692"/>
    </ligand>
</feature>
<dbReference type="EC" id="2.1.1.74" evidence="1"/>
<dbReference type="EMBL" id="AE000657">
    <property type="protein sequence ID" value="AAC06872.1"/>
    <property type="molecule type" value="Genomic_DNA"/>
</dbReference>
<dbReference type="PIR" id="E70360">
    <property type="entry name" value="E70360"/>
</dbReference>
<dbReference type="RefSeq" id="NP_213473.1">
    <property type="nucleotide sequence ID" value="NC_000918.1"/>
</dbReference>
<dbReference type="RefSeq" id="WP_010880411.1">
    <property type="nucleotide sequence ID" value="NC_000918.1"/>
</dbReference>
<dbReference type="SMR" id="O66913"/>
<dbReference type="STRING" id="224324.aq_691"/>
<dbReference type="EnsemblBacteria" id="AAC06872">
    <property type="protein sequence ID" value="AAC06872"/>
    <property type="gene ID" value="aq_691"/>
</dbReference>
<dbReference type="KEGG" id="aae:aq_691"/>
<dbReference type="PATRIC" id="fig|224324.8.peg.555"/>
<dbReference type="eggNOG" id="COG1206">
    <property type="taxonomic scope" value="Bacteria"/>
</dbReference>
<dbReference type="HOGENOM" id="CLU_033057_1_0_0"/>
<dbReference type="InParanoid" id="O66913"/>
<dbReference type="OrthoDB" id="9803114at2"/>
<dbReference type="Proteomes" id="UP000000798">
    <property type="component" value="Chromosome"/>
</dbReference>
<dbReference type="GO" id="GO:0005829">
    <property type="term" value="C:cytosol"/>
    <property type="evidence" value="ECO:0000318"/>
    <property type="project" value="GO_Central"/>
</dbReference>
<dbReference type="GO" id="GO:0050660">
    <property type="term" value="F:flavin adenine dinucleotide binding"/>
    <property type="evidence" value="ECO:0000318"/>
    <property type="project" value="GO_Central"/>
</dbReference>
<dbReference type="GO" id="GO:0047151">
    <property type="term" value="F:tRNA (uracil(54)-C5)-methyltransferase activity, 5,10-methylenetetrahydrofolate-dependent"/>
    <property type="evidence" value="ECO:0007669"/>
    <property type="project" value="UniProtKB-UniRule"/>
</dbReference>
<dbReference type="GO" id="GO:0030488">
    <property type="term" value="P:tRNA methylation"/>
    <property type="evidence" value="ECO:0000318"/>
    <property type="project" value="GO_Central"/>
</dbReference>
<dbReference type="GO" id="GO:0002098">
    <property type="term" value="P:tRNA wobble uridine modification"/>
    <property type="evidence" value="ECO:0000318"/>
    <property type="project" value="GO_Central"/>
</dbReference>
<dbReference type="FunFam" id="3.50.50.60:FF:000035">
    <property type="entry name" value="Methylenetetrahydrofolate--tRNA-(uracil-5-)-methyltransferase TrmFO"/>
    <property type="match status" value="1"/>
</dbReference>
<dbReference type="FunFam" id="3.50.50.60:FF:000040">
    <property type="entry name" value="Methylenetetrahydrofolate--tRNA-(uracil-5-)-methyltransferase TrmFO"/>
    <property type="match status" value="1"/>
</dbReference>
<dbReference type="Gene3D" id="3.50.50.60">
    <property type="entry name" value="FAD/NAD(P)-binding domain"/>
    <property type="match status" value="2"/>
</dbReference>
<dbReference type="HAMAP" id="MF_01037">
    <property type="entry name" value="TrmFO"/>
    <property type="match status" value="1"/>
</dbReference>
<dbReference type="InterPro" id="IPR036188">
    <property type="entry name" value="FAD/NAD-bd_sf"/>
</dbReference>
<dbReference type="InterPro" id="IPR002218">
    <property type="entry name" value="MnmG-rel"/>
</dbReference>
<dbReference type="InterPro" id="IPR020595">
    <property type="entry name" value="MnmG-rel_CS"/>
</dbReference>
<dbReference type="InterPro" id="IPR040131">
    <property type="entry name" value="MnmG_N"/>
</dbReference>
<dbReference type="InterPro" id="IPR004417">
    <property type="entry name" value="TrmFO"/>
</dbReference>
<dbReference type="NCBIfam" id="TIGR00137">
    <property type="entry name" value="gid_trmFO"/>
    <property type="match status" value="1"/>
</dbReference>
<dbReference type="NCBIfam" id="NF003739">
    <property type="entry name" value="PRK05335.1"/>
    <property type="match status" value="1"/>
</dbReference>
<dbReference type="PANTHER" id="PTHR11806">
    <property type="entry name" value="GLUCOSE INHIBITED DIVISION PROTEIN A"/>
    <property type="match status" value="1"/>
</dbReference>
<dbReference type="PANTHER" id="PTHR11806:SF2">
    <property type="entry name" value="METHYLENETETRAHYDROFOLATE--TRNA-(URACIL-5-)-METHYLTRANSFERASE TRMFO"/>
    <property type="match status" value="1"/>
</dbReference>
<dbReference type="Pfam" id="PF01134">
    <property type="entry name" value="GIDA"/>
    <property type="match status" value="1"/>
</dbReference>
<dbReference type="SUPFAM" id="SSF51905">
    <property type="entry name" value="FAD/NAD(P)-binding domain"/>
    <property type="match status" value="1"/>
</dbReference>
<dbReference type="PROSITE" id="PS01281">
    <property type="entry name" value="GIDA_2"/>
    <property type="match status" value="1"/>
</dbReference>
<accession>O66913</accession>
<reference key="1">
    <citation type="journal article" date="1998" name="Nature">
        <title>The complete genome of the hyperthermophilic bacterium Aquifex aeolicus.</title>
        <authorList>
            <person name="Deckert G."/>
            <person name="Warren P.V."/>
            <person name="Gaasterland T."/>
            <person name="Young W.G."/>
            <person name="Lenox A.L."/>
            <person name="Graham D.E."/>
            <person name="Overbeek R."/>
            <person name="Snead M.A."/>
            <person name="Keller M."/>
            <person name="Aujay M."/>
            <person name="Huber R."/>
            <person name="Feldman R.A."/>
            <person name="Short J.M."/>
            <person name="Olsen G.J."/>
            <person name="Swanson R.V."/>
        </authorList>
    </citation>
    <scope>NUCLEOTIDE SEQUENCE [LARGE SCALE GENOMIC DNA]</scope>
    <source>
        <strain>VF5</strain>
    </source>
</reference>
<keyword id="KW-0963">Cytoplasm</keyword>
<keyword id="KW-0274">FAD</keyword>
<keyword id="KW-0285">Flavoprotein</keyword>
<keyword id="KW-0489">Methyltransferase</keyword>
<keyword id="KW-0520">NAD</keyword>
<keyword id="KW-0521">NADP</keyword>
<keyword id="KW-1185">Reference proteome</keyword>
<keyword id="KW-0808">Transferase</keyword>
<keyword id="KW-0819">tRNA processing</keyword>
<gene>
    <name evidence="1" type="primary">trmFO</name>
    <name type="synonym">gid</name>
    <name type="synonym">gidA2</name>
    <name type="ordered locus">aq_691</name>
</gene>
<proteinExistence type="inferred from homology"/>
<protein>
    <recommendedName>
        <fullName evidence="1">Methylenetetrahydrofolate--tRNA-(uracil-5-)-methyltransferase TrmFO</fullName>
        <ecNumber evidence="1">2.1.1.74</ecNumber>
    </recommendedName>
    <alternativeName>
        <fullName evidence="1">Folate-dependent tRNA (uracil-5-)-methyltransferase</fullName>
    </alternativeName>
    <alternativeName>
        <fullName evidence="1">Folate-dependent tRNA(M-5-U54)-methyltransferase</fullName>
    </alternativeName>
</protein>